<feature type="chain" id="PRO_0000391910" description="Probable ATP-dependent RNA helicase spindle-E">
    <location>
        <begin position="1"/>
        <end position="1374"/>
    </location>
</feature>
<feature type="domain" description="Helicase ATP-binding" evidence="2">
    <location>
        <begin position="46"/>
        <end position="212"/>
    </location>
</feature>
<feature type="domain" description="Helicase C-terminal" evidence="3">
    <location>
        <begin position="265"/>
        <end position="447"/>
    </location>
</feature>
<feature type="domain" description="Tudor">
    <location>
        <begin position="866"/>
        <end position="931"/>
    </location>
</feature>
<feature type="short sequence motif" description="DEAH box">
    <location>
        <begin position="158"/>
        <end position="161"/>
    </location>
</feature>
<feature type="binding site" evidence="2">
    <location>
        <begin position="59"/>
        <end position="66"/>
    </location>
    <ligand>
        <name>ATP</name>
        <dbReference type="ChEBI" id="CHEBI:30616"/>
    </ligand>
</feature>
<organism>
    <name type="scientific">Aedes aegypti</name>
    <name type="common">Yellowfever mosquito</name>
    <name type="synonym">Culex aegypti</name>
    <dbReference type="NCBI Taxonomy" id="7159"/>
    <lineage>
        <taxon>Eukaryota</taxon>
        <taxon>Metazoa</taxon>
        <taxon>Ecdysozoa</taxon>
        <taxon>Arthropoda</taxon>
        <taxon>Hexapoda</taxon>
        <taxon>Insecta</taxon>
        <taxon>Pterygota</taxon>
        <taxon>Neoptera</taxon>
        <taxon>Endopterygota</taxon>
        <taxon>Diptera</taxon>
        <taxon>Nematocera</taxon>
        <taxon>Culicoidea</taxon>
        <taxon>Culicidae</taxon>
        <taxon>Culicinae</taxon>
        <taxon>Aedini</taxon>
        <taxon>Aedes</taxon>
        <taxon>Stegomyia</taxon>
    </lineage>
</organism>
<sequence length="1374" mass="157427">MSMADEDEEHTKALKAKEMMLPLFQKYNFTLKHNKLPIRHSKDDILARIRENPVIVLEGPTGCGKTTQVPQFILEEAYHRKEYCNIIVTQPRKIAAMSIAKRVSEERKCELGTLVGFKVGLKECLSPDTRLLYCTTGVLLQSLINSKTMANYTHVILDEIHEREVDMDFLLIVVRRFLATNSSKTKVILMSATIDSKAFAEYFKTPKKVGYLTAPIISVDRPRLYEVKEFYYDDLDKLRLDFAIDYENPGISSHMYTVAAKLVLVCDRLIENMHGEERMEYKPTVLIFLPGINEIDRMDHVLRETLTRIVNPKEKPNLDIHRLHSILPADEQVKVFRKPAPGQRKVILSTNIAESSITVPDVKFIIDFCLQRVLFTDTTTNFSTLRTEWASQANCIQRQGRAGRVMDGRVYRLVDRRFYENQMRFSTSPEILRCPLENVILKAKLLEMGPPHSILALAMNPPDLSDIRNTVLQLKELGALVQTVKGNYEQLDGDLTYMGRIMAKLPLDLRISKLIILGYIFSVLEESIIIAAGMNEKNIFLNQNSVRGYSQKMYWADGSGSDGIAILNAYIAWKSRKEQAGNESDMASWTRRMSLDLKCLMDMAELIREIKDRLNHVGMKEVSGPGRVVWSSREKTVILKVIMAGAFYPNYFIPMSVGGKELMERQSFTELGGRDPCNTVFFTGFDHEKYIGPLYTVQIKKLLSEGDFSKHQNMKVMYDRTTNRIFVTFLGSNDEHDQRGAFMPGKVHADVYRAIKLRKLGSRNRIMEIRTMRQRDAIEFATEMNLGHWEDANGWVPRRKVIRNAHLSVIPAIHQASMVCQVTNVIHCNKFYLRPEDTKNKDIFMDIHSKLNSRGYRLERFDPDWQFAVGQMVAAPLEEGSDRYARAVLKNYKNIRSTGDVMWTVFFLDYGHSSVLGQSAFRKLDGPLAYMKEIPQRVFEATLSEIQPSAIISPQGIWTAQSINRFKEMTLGKIFVVDVYSVVNDVASVVLKKGDEVPINSELIRLKFAQYAEESYISKLDHDMRERKQREMSLDEDVRYEVYHSSKNNQLKYEEDELEDVSPPEEKLRCKVMLSGPHSPLETTASSTVRSGVMKPVTIENDSVNSILLDSNPQDTHEKMLVGAFVHEQGNRLVVRQASMMPNIPGFGPLMALIFCPTCQMKKDEEETRVVSILTGLGCDKNTGESLFPEHDLALTLDVVLSDDDITEINALRYTMDTILHTDQDQTVPKFGDVSIENLKAKVKQYIIKILEHERKFMDIRHAPNDYDWKLVEENNAAEASSSSKKRKQDFNIYDNAIYPLLPPLGLLPVSAKQLDFLKRHCRELHKLALTDVNLPRHGITCQMCNTILETLPQLRIHLYSKLHRDRESQIKFR</sequence>
<protein>
    <recommendedName>
        <fullName>Probable ATP-dependent RNA helicase spindle-E</fullName>
        <ecNumber>3.6.4.13</ecNumber>
    </recommendedName>
</protein>
<dbReference type="EC" id="3.6.4.13"/>
<dbReference type="EMBL" id="CH477994">
    <property type="protein sequence ID" value="EAT34533.1"/>
    <property type="molecule type" value="Genomic_DNA"/>
</dbReference>
<dbReference type="RefSeq" id="XP_001663402.1">
    <property type="nucleotide sequence ID" value="XM_001663352.1"/>
</dbReference>
<dbReference type="SMR" id="Q16JS8"/>
<dbReference type="FunCoup" id="Q16JS8">
    <property type="interactions" value="167"/>
</dbReference>
<dbReference type="STRING" id="7159.Q16JS8"/>
<dbReference type="PaxDb" id="7159-AAEL013235-PA"/>
<dbReference type="GeneID" id="5577484"/>
<dbReference type="KEGG" id="aag:5577484"/>
<dbReference type="VEuPathDB" id="VectorBase:AAEL023716"/>
<dbReference type="eggNOG" id="KOG0920">
    <property type="taxonomic scope" value="Eukaryota"/>
</dbReference>
<dbReference type="HOGENOM" id="CLU_002601_1_0_1"/>
<dbReference type="InParanoid" id="Q16JS8"/>
<dbReference type="OMA" id="QRSAYCS"/>
<dbReference type="OrthoDB" id="66977at2759"/>
<dbReference type="PhylomeDB" id="Q16JS8"/>
<dbReference type="Proteomes" id="UP000008820">
    <property type="component" value="Unassembled WGS sequence"/>
</dbReference>
<dbReference type="Proteomes" id="UP000682892">
    <property type="component" value="Unassembled WGS sequence"/>
</dbReference>
<dbReference type="GO" id="GO:0005737">
    <property type="term" value="C:cytoplasm"/>
    <property type="evidence" value="ECO:0007669"/>
    <property type="project" value="UniProtKB-SubCell"/>
</dbReference>
<dbReference type="GO" id="GO:0005524">
    <property type="term" value="F:ATP binding"/>
    <property type="evidence" value="ECO:0007669"/>
    <property type="project" value="UniProtKB-KW"/>
</dbReference>
<dbReference type="GO" id="GO:0016887">
    <property type="term" value="F:ATP hydrolysis activity"/>
    <property type="evidence" value="ECO:0007669"/>
    <property type="project" value="RHEA"/>
</dbReference>
<dbReference type="GO" id="GO:0003723">
    <property type="term" value="F:RNA binding"/>
    <property type="evidence" value="ECO:0007669"/>
    <property type="project" value="TreeGrafter"/>
</dbReference>
<dbReference type="GO" id="GO:0003724">
    <property type="term" value="F:RNA helicase activity"/>
    <property type="evidence" value="ECO:0007669"/>
    <property type="project" value="UniProtKB-EC"/>
</dbReference>
<dbReference type="GO" id="GO:0030154">
    <property type="term" value="P:cell differentiation"/>
    <property type="evidence" value="ECO:0007669"/>
    <property type="project" value="UniProtKB-KW"/>
</dbReference>
<dbReference type="GO" id="GO:0051321">
    <property type="term" value="P:meiotic cell cycle"/>
    <property type="evidence" value="ECO:0007669"/>
    <property type="project" value="UniProtKB-KW"/>
</dbReference>
<dbReference type="GO" id="GO:0031047">
    <property type="term" value="P:regulatory ncRNA-mediated gene silencing"/>
    <property type="evidence" value="ECO:0007669"/>
    <property type="project" value="UniProtKB-KW"/>
</dbReference>
<dbReference type="GO" id="GO:0007283">
    <property type="term" value="P:spermatogenesis"/>
    <property type="evidence" value="ECO:0007669"/>
    <property type="project" value="UniProtKB-KW"/>
</dbReference>
<dbReference type="CDD" id="cd18791">
    <property type="entry name" value="SF2_C_RHA"/>
    <property type="match status" value="1"/>
</dbReference>
<dbReference type="CDD" id="cd20379">
    <property type="entry name" value="Tudor_dTUD-like"/>
    <property type="match status" value="1"/>
</dbReference>
<dbReference type="FunFam" id="3.40.50.300:FF:001676">
    <property type="entry name" value="DExH-box ATP-dependent RNA helicase DExH7 chloroplastic"/>
    <property type="match status" value="1"/>
</dbReference>
<dbReference type="Gene3D" id="1.20.120.1080">
    <property type="match status" value="1"/>
</dbReference>
<dbReference type="Gene3D" id="2.30.30.140">
    <property type="match status" value="1"/>
</dbReference>
<dbReference type="Gene3D" id="2.40.50.90">
    <property type="match status" value="1"/>
</dbReference>
<dbReference type="Gene3D" id="3.40.50.300">
    <property type="entry name" value="P-loop containing nucleotide triphosphate hydrolases"/>
    <property type="match status" value="2"/>
</dbReference>
<dbReference type="InterPro" id="IPR011545">
    <property type="entry name" value="DEAD/DEAH_box_helicase_dom"/>
</dbReference>
<dbReference type="InterPro" id="IPR007502">
    <property type="entry name" value="Helicase-assoc_dom"/>
</dbReference>
<dbReference type="InterPro" id="IPR014001">
    <property type="entry name" value="Helicase_ATP-bd"/>
</dbReference>
<dbReference type="InterPro" id="IPR001650">
    <property type="entry name" value="Helicase_C-like"/>
</dbReference>
<dbReference type="InterPro" id="IPR027417">
    <property type="entry name" value="P-loop_NTPase"/>
</dbReference>
<dbReference type="InterPro" id="IPR035437">
    <property type="entry name" value="SNase_OB-fold_sf"/>
</dbReference>
<dbReference type="InterPro" id="IPR002999">
    <property type="entry name" value="Tudor"/>
</dbReference>
<dbReference type="InterPro" id="IPR013087">
    <property type="entry name" value="Znf_C2H2_type"/>
</dbReference>
<dbReference type="PANTHER" id="PTHR18934">
    <property type="entry name" value="ATP-DEPENDENT RNA HELICASE"/>
    <property type="match status" value="1"/>
</dbReference>
<dbReference type="PANTHER" id="PTHR18934:SF113">
    <property type="entry name" value="ATP-DEPENDENT RNA HELICASE TDRD9"/>
    <property type="match status" value="1"/>
</dbReference>
<dbReference type="Pfam" id="PF00270">
    <property type="entry name" value="DEAD"/>
    <property type="match status" value="1"/>
</dbReference>
<dbReference type="Pfam" id="PF21010">
    <property type="entry name" value="HA2_C"/>
    <property type="match status" value="1"/>
</dbReference>
<dbReference type="Pfam" id="PF00271">
    <property type="entry name" value="Helicase_C"/>
    <property type="match status" value="1"/>
</dbReference>
<dbReference type="Pfam" id="PF00567">
    <property type="entry name" value="TUDOR"/>
    <property type="match status" value="1"/>
</dbReference>
<dbReference type="SMART" id="SM00487">
    <property type="entry name" value="DEXDc"/>
    <property type="match status" value="1"/>
</dbReference>
<dbReference type="SMART" id="SM00847">
    <property type="entry name" value="HA2"/>
    <property type="match status" value="1"/>
</dbReference>
<dbReference type="SMART" id="SM00490">
    <property type="entry name" value="HELICc"/>
    <property type="match status" value="1"/>
</dbReference>
<dbReference type="SUPFAM" id="SSF52540">
    <property type="entry name" value="P-loop containing nucleoside triphosphate hydrolases"/>
    <property type="match status" value="1"/>
</dbReference>
<dbReference type="SUPFAM" id="SSF63748">
    <property type="entry name" value="Tudor/PWWP/MBT"/>
    <property type="match status" value="1"/>
</dbReference>
<dbReference type="PROSITE" id="PS51192">
    <property type="entry name" value="HELICASE_ATP_BIND_1"/>
    <property type="match status" value="1"/>
</dbReference>
<dbReference type="PROSITE" id="PS51194">
    <property type="entry name" value="HELICASE_CTER"/>
    <property type="match status" value="1"/>
</dbReference>
<comment type="function">
    <text evidence="1">Probable ATP-binding RNA helicase which plays a central role during gametogenesis by repressing transposable elements and preventing their mobilization, which is essential for the germline integrity. Acts via the piRNA metabolic process, which mediates the repression of transposable elements during meiosis by forming complexes composed of piRNAs and Piwi proteins and govern the methylation and subsequent repression of transposons (By similarity).</text>
</comment>
<comment type="catalytic activity">
    <reaction>
        <text>ATP + H2O = ADP + phosphate + H(+)</text>
        <dbReference type="Rhea" id="RHEA:13065"/>
        <dbReference type="ChEBI" id="CHEBI:15377"/>
        <dbReference type="ChEBI" id="CHEBI:15378"/>
        <dbReference type="ChEBI" id="CHEBI:30616"/>
        <dbReference type="ChEBI" id="CHEBI:43474"/>
        <dbReference type="ChEBI" id="CHEBI:456216"/>
        <dbReference type="EC" id="3.6.4.13"/>
    </reaction>
</comment>
<comment type="subcellular location">
    <subcellularLocation>
        <location evidence="1">Cytoplasm</location>
    </subcellularLocation>
    <text evidence="1">Component of the nuage, also named P granule, a germ-cell-specific organelle required to repress transposon during meiosis.</text>
</comment>
<comment type="similarity">
    <text evidence="4">Belongs to the DEAD box helicase family. DEAH subfamily.</text>
</comment>
<proteinExistence type="inferred from homology"/>
<evidence type="ECO:0000250" key="1"/>
<evidence type="ECO:0000255" key="2">
    <source>
        <dbReference type="PROSITE-ProRule" id="PRU00541"/>
    </source>
</evidence>
<evidence type="ECO:0000255" key="3">
    <source>
        <dbReference type="PROSITE-ProRule" id="PRU00542"/>
    </source>
</evidence>
<evidence type="ECO:0000305" key="4"/>
<reference key="1">
    <citation type="journal article" date="2007" name="Science">
        <title>Genome sequence of Aedes aegypti, a major arbovirus vector.</title>
        <authorList>
            <person name="Nene V."/>
            <person name="Wortman J.R."/>
            <person name="Lawson D."/>
            <person name="Haas B.J."/>
            <person name="Kodira C.D."/>
            <person name="Tu Z.J."/>
            <person name="Loftus B.J."/>
            <person name="Xi Z."/>
            <person name="Megy K."/>
            <person name="Grabherr M."/>
            <person name="Ren Q."/>
            <person name="Zdobnov E.M."/>
            <person name="Lobo N.F."/>
            <person name="Campbell K.S."/>
            <person name="Brown S.E."/>
            <person name="Bonaldo M.F."/>
            <person name="Zhu J."/>
            <person name="Sinkins S.P."/>
            <person name="Hogenkamp D.G."/>
            <person name="Amedeo P."/>
            <person name="Arensburger P."/>
            <person name="Atkinson P.W."/>
            <person name="Bidwell S.L."/>
            <person name="Biedler J."/>
            <person name="Birney E."/>
            <person name="Bruggner R.V."/>
            <person name="Costas J."/>
            <person name="Coy M.R."/>
            <person name="Crabtree J."/>
            <person name="Crawford M."/>
            <person name="DeBruyn B."/>
            <person name="DeCaprio D."/>
            <person name="Eiglmeier K."/>
            <person name="Eisenstadt E."/>
            <person name="El-Dorry H."/>
            <person name="Gelbart W.M."/>
            <person name="Gomes S.L."/>
            <person name="Hammond M."/>
            <person name="Hannick L.I."/>
            <person name="Hogan J.R."/>
            <person name="Holmes M.H."/>
            <person name="Jaffe D."/>
            <person name="Johnston S.J."/>
            <person name="Kennedy R.C."/>
            <person name="Koo H."/>
            <person name="Kravitz S."/>
            <person name="Kriventseva E.V."/>
            <person name="Kulp D."/>
            <person name="Labutti K."/>
            <person name="Lee E."/>
            <person name="Li S."/>
            <person name="Lovin D.D."/>
            <person name="Mao C."/>
            <person name="Mauceli E."/>
            <person name="Menck C.F."/>
            <person name="Miller J.R."/>
            <person name="Montgomery P."/>
            <person name="Mori A."/>
            <person name="Nascimento A.L."/>
            <person name="Naveira H.F."/>
            <person name="Nusbaum C."/>
            <person name="O'Leary S.B."/>
            <person name="Orvis J."/>
            <person name="Pertea M."/>
            <person name="Quesneville H."/>
            <person name="Reidenbach K.R."/>
            <person name="Rogers Y.-H.C."/>
            <person name="Roth C.W."/>
            <person name="Schneider J.R."/>
            <person name="Schatz M."/>
            <person name="Shumway M."/>
            <person name="Stanke M."/>
            <person name="Stinson E.O."/>
            <person name="Tubio J.M.C."/>
            <person name="Vanzee J.P."/>
            <person name="Verjovski-Almeida S."/>
            <person name="Werner D."/>
            <person name="White O.R."/>
            <person name="Wyder S."/>
            <person name="Zeng Q."/>
            <person name="Zhao Q."/>
            <person name="Zhao Y."/>
            <person name="Hill C.A."/>
            <person name="Raikhel A.S."/>
            <person name="Soares M.B."/>
            <person name="Knudson D.L."/>
            <person name="Lee N.H."/>
            <person name="Galagan J."/>
            <person name="Salzberg S.L."/>
            <person name="Paulsen I.T."/>
            <person name="Dimopoulos G."/>
            <person name="Collins F.H."/>
            <person name="Bruce B."/>
            <person name="Fraser-Liggett C.M."/>
            <person name="Severson D.W."/>
        </authorList>
    </citation>
    <scope>NUCLEOTIDE SEQUENCE [LARGE SCALE GENOMIC DNA]</scope>
    <source>
        <strain>LVPib12</strain>
    </source>
</reference>
<accession>Q16JS8</accession>
<keyword id="KW-0067">ATP-binding</keyword>
<keyword id="KW-0963">Cytoplasm</keyword>
<keyword id="KW-0217">Developmental protein</keyword>
<keyword id="KW-0221">Differentiation</keyword>
<keyword id="KW-0347">Helicase</keyword>
<keyword id="KW-0378">Hydrolase</keyword>
<keyword id="KW-0469">Meiosis</keyword>
<keyword id="KW-0547">Nucleotide-binding</keyword>
<keyword id="KW-1185">Reference proteome</keyword>
<keyword id="KW-0943">RNA-mediated gene silencing</keyword>
<keyword id="KW-0744">Spermatogenesis</keyword>
<gene>
    <name type="primary">spn-E</name>
    <name type="ORF">AAEL013235</name>
</gene>
<name>SPNE_AEDAE</name>